<comment type="function">
    <text evidence="5">May be involved in floral abscission.</text>
</comment>
<comment type="subcellular location">
    <subcellularLocation>
        <location evidence="1">Secreted</location>
        <location evidence="1">Extracellular space</location>
    </subcellularLocation>
</comment>
<comment type="tissue specificity">
    <text evidence="4 5">Expressed in flowers and seedlings. Detected at the base of pedicel, in the floral abscission zone and in vascular tissues.</text>
</comment>
<comment type="miscellaneous">
    <text>IDL3 is only partially redundant with IDA.</text>
</comment>
<organism>
    <name type="scientific">Arabidopsis thaliana</name>
    <name type="common">Mouse-ear cress</name>
    <dbReference type="NCBI Taxonomy" id="3702"/>
    <lineage>
        <taxon>Eukaryota</taxon>
        <taxon>Viridiplantae</taxon>
        <taxon>Streptophyta</taxon>
        <taxon>Embryophyta</taxon>
        <taxon>Tracheophyta</taxon>
        <taxon>Spermatophyta</taxon>
        <taxon>Magnoliopsida</taxon>
        <taxon>eudicotyledons</taxon>
        <taxon>Gunneridae</taxon>
        <taxon>Pentapetalae</taxon>
        <taxon>rosids</taxon>
        <taxon>malvids</taxon>
        <taxon>Brassicales</taxon>
        <taxon>Brassicaceae</taxon>
        <taxon>Camelineae</taxon>
        <taxon>Arabidopsis</taxon>
    </lineage>
</organism>
<name>IDL3_ARATH</name>
<sequence>MSSRSHRSRKYQLTRTIPILVLLLVLLSCCNGARTTNVFNTSSPPKQKDVVSPPHDHVHHQVQDHKSVQFLGSLPRQFPVPTSGPSRKHNEIGLSSTKT</sequence>
<accession>Q6DUW7</accession>
<dbReference type="EMBL" id="AY642387">
    <property type="protein sequence ID" value="AAT66017.1"/>
    <property type="molecule type" value="Genomic_DNA"/>
</dbReference>
<dbReference type="EMBL" id="AL353994">
    <property type="status" value="NOT_ANNOTATED_CDS"/>
    <property type="molecule type" value="Genomic_DNA"/>
</dbReference>
<dbReference type="EMBL" id="AB016893">
    <property type="status" value="NOT_ANNOTATED_CDS"/>
    <property type="molecule type" value="Genomic_DNA"/>
</dbReference>
<dbReference type="EMBL" id="CP002688">
    <property type="protein sequence ID" value="AED91449.1"/>
    <property type="molecule type" value="Genomic_DNA"/>
</dbReference>
<dbReference type="RefSeq" id="NP_001318520.1">
    <property type="nucleotide sequence ID" value="NM_001343069.1"/>
</dbReference>
<dbReference type="PDB" id="7OGZ">
    <property type="method" value="X-ray"/>
    <property type="resolution" value="2.70 A"/>
    <property type="chains" value="CCC/FFF=79-90"/>
</dbReference>
<dbReference type="PDBsum" id="7OGZ"/>
<dbReference type="SMR" id="Q6DUW7"/>
<dbReference type="STRING" id="3702.Q6DUW7"/>
<dbReference type="PaxDb" id="3702-AT5G09805.1"/>
<dbReference type="EnsemblPlants" id="AT5G09805.1">
    <property type="protein sequence ID" value="AT5G09805.1"/>
    <property type="gene ID" value="AT5G09805"/>
</dbReference>
<dbReference type="GeneID" id="28721130"/>
<dbReference type="Gramene" id="AT5G09805.1">
    <property type="protein sequence ID" value="AT5G09805.1"/>
    <property type="gene ID" value="AT5G09805"/>
</dbReference>
<dbReference type="KEGG" id="ath:AT5G09805"/>
<dbReference type="Araport" id="AT5G09805"/>
<dbReference type="TAIR" id="AT5G09805">
    <property type="gene designation" value="IDL3"/>
</dbReference>
<dbReference type="HOGENOM" id="CLU_186343_0_1_1"/>
<dbReference type="InParanoid" id="Q6DUW7"/>
<dbReference type="OMA" id="QDHKSVQ"/>
<dbReference type="OrthoDB" id="1935957at2759"/>
<dbReference type="PhylomeDB" id="Q6DUW7"/>
<dbReference type="PRO" id="PR:Q6DUW7"/>
<dbReference type="Proteomes" id="UP000006548">
    <property type="component" value="Chromosome 5"/>
</dbReference>
<dbReference type="ExpressionAtlas" id="Q6DUW7">
    <property type="expression patterns" value="baseline and differential"/>
</dbReference>
<dbReference type="GO" id="GO:0048046">
    <property type="term" value="C:apoplast"/>
    <property type="evidence" value="ECO:0000304"/>
    <property type="project" value="TAIR"/>
</dbReference>
<dbReference type="GO" id="GO:0010227">
    <property type="term" value="P:floral organ abscission"/>
    <property type="evidence" value="ECO:0000315"/>
    <property type="project" value="TAIR"/>
</dbReference>
<dbReference type="InterPro" id="IPR039639">
    <property type="entry name" value="IDA-like"/>
</dbReference>
<dbReference type="PANTHER" id="PTHR33599:SF17">
    <property type="entry name" value="PROTEIN IDA-LIKE 3"/>
    <property type="match status" value="1"/>
</dbReference>
<dbReference type="PANTHER" id="PTHR33599">
    <property type="entry name" value="PROTEIN IDA-LIKE 5"/>
    <property type="match status" value="1"/>
</dbReference>
<evidence type="ECO:0000250" key="1"/>
<evidence type="ECO:0000255" key="2"/>
<evidence type="ECO:0000256" key="3">
    <source>
        <dbReference type="SAM" id="MobiDB-lite"/>
    </source>
</evidence>
<evidence type="ECO:0000269" key="4">
    <source>
    </source>
</evidence>
<evidence type="ECO:0000269" key="5">
    <source>
    </source>
</evidence>
<proteinExistence type="evidence at protein level"/>
<keyword id="KW-0002">3D-structure</keyword>
<keyword id="KW-1185">Reference proteome</keyword>
<keyword id="KW-0964">Secreted</keyword>
<keyword id="KW-0732">Signal</keyword>
<gene>
    <name type="primary">IDL3</name>
    <name type="ordered locus">At5g09805</name>
    <name type="ORF">F17I14</name>
    <name type="ORF">MYH9</name>
</gene>
<feature type="signal peptide" evidence="2">
    <location>
        <begin position="1"/>
        <end position="32"/>
    </location>
</feature>
<feature type="chain" id="PRO_0000383591" description="Protein IDA-LIKE 3">
    <location>
        <begin position="33"/>
        <end position="99"/>
    </location>
</feature>
<feature type="region of interest" description="Disordered" evidence="3">
    <location>
        <begin position="36"/>
        <end position="58"/>
    </location>
</feature>
<feature type="region of interest" description="Disordered" evidence="3">
    <location>
        <begin position="73"/>
        <end position="99"/>
    </location>
</feature>
<feature type="compositionally biased region" description="Polar residues" evidence="3">
    <location>
        <begin position="36"/>
        <end position="45"/>
    </location>
</feature>
<feature type="compositionally biased region" description="Basic and acidic residues" evidence="3">
    <location>
        <begin position="46"/>
        <end position="58"/>
    </location>
</feature>
<reference key="1">
    <citation type="journal article" date="2003" name="Plant Cell">
        <title>Inflorescence deficient in abscission controls floral organ abscission in Arabidopsis and identifies a novel family of putative ligands in plants.</title>
        <authorList>
            <person name="Butenko M.A."/>
            <person name="Patterson S.E."/>
            <person name="Grini P.E."/>
            <person name="Stenvik G.-E."/>
            <person name="Amundsen S.S."/>
            <person name="Mandal A."/>
            <person name="Aalen R.B."/>
        </authorList>
    </citation>
    <scope>NUCLEOTIDE SEQUENCE [GENOMIC DNA]</scope>
    <scope>TISSUE SPECIFICITY</scope>
</reference>
<reference key="2">
    <citation type="journal article" date="2000" name="Nature">
        <title>Sequence and analysis of chromosome 5 of the plant Arabidopsis thaliana.</title>
        <authorList>
            <person name="Tabata S."/>
            <person name="Kaneko T."/>
            <person name="Nakamura Y."/>
            <person name="Kotani H."/>
            <person name="Kato T."/>
            <person name="Asamizu E."/>
            <person name="Miyajima N."/>
            <person name="Sasamoto S."/>
            <person name="Kimura T."/>
            <person name="Hosouchi T."/>
            <person name="Kawashima K."/>
            <person name="Kohara M."/>
            <person name="Matsumoto M."/>
            <person name="Matsuno A."/>
            <person name="Muraki A."/>
            <person name="Nakayama S."/>
            <person name="Nakazaki N."/>
            <person name="Naruo K."/>
            <person name="Okumura S."/>
            <person name="Shinpo S."/>
            <person name="Takeuchi C."/>
            <person name="Wada T."/>
            <person name="Watanabe A."/>
            <person name="Yamada M."/>
            <person name="Yasuda M."/>
            <person name="Sato S."/>
            <person name="de la Bastide M."/>
            <person name="Huang E."/>
            <person name="Spiegel L."/>
            <person name="Gnoj L."/>
            <person name="O'Shaughnessy A."/>
            <person name="Preston R."/>
            <person name="Habermann K."/>
            <person name="Murray J."/>
            <person name="Johnson D."/>
            <person name="Rohlfing T."/>
            <person name="Nelson J."/>
            <person name="Stoneking T."/>
            <person name="Pepin K."/>
            <person name="Spieth J."/>
            <person name="Sekhon M."/>
            <person name="Armstrong J."/>
            <person name="Becker M."/>
            <person name="Belter E."/>
            <person name="Cordum H."/>
            <person name="Cordes M."/>
            <person name="Courtney L."/>
            <person name="Courtney W."/>
            <person name="Dante M."/>
            <person name="Du H."/>
            <person name="Edwards J."/>
            <person name="Fryman J."/>
            <person name="Haakensen B."/>
            <person name="Lamar E."/>
            <person name="Latreille P."/>
            <person name="Leonard S."/>
            <person name="Meyer R."/>
            <person name="Mulvaney E."/>
            <person name="Ozersky P."/>
            <person name="Riley A."/>
            <person name="Strowmatt C."/>
            <person name="Wagner-McPherson C."/>
            <person name="Wollam A."/>
            <person name="Yoakum M."/>
            <person name="Bell M."/>
            <person name="Dedhia N."/>
            <person name="Parnell L."/>
            <person name="Shah R."/>
            <person name="Rodriguez M."/>
            <person name="Hoon See L."/>
            <person name="Vil D."/>
            <person name="Baker J."/>
            <person name="Kirchoff K."/>
            <person name="Toth K."/>
            <person name="King L."/>
            <person name="Bahret A."/>
            <person name="Miller B."/>
            <person name="Marra M.A."/>
            <person name="Martienssen R."/>
            <person name="McCombie W.R."/>
            <person name="Wilson R.K."/>
            <person name="Murphy G."/>
            <person name="Bancroft I."/>
            <person name="Volckaert G."/>
            <person name="Wambutt R."/>
            <person name="Duesterhoeft A."/>
            <person name="Stiekema W."/>
            <person name="Pohl T."/>
            <person name="Entian K.-D."/>
            <person name="Terryn N."/>
            <person name="Hartley N."/>
            <person name="Bent E."/>
            <person name="Johnson S."/>
            <person name="Langham S.-A."/>
            <person name="McCullagh B."/>
            <person name="Robben J."/>
            <person name="Grymonprez B."/>
            <person name="Zimmermann W."/>
            <person name="Ramsperger U."/>
            <person name="Wedler H."/>
            <person name="Balke K."/>
            <person name="Wedler E."/>
            <person name="Peters S."/>
            <person name="van Staveren M."/>
            <person name="Dirkse W."/>
            <person name="Mooijman P."/>
            <person name="Klein Lankhorst R."/>
            <person name="Weitzenegger T."/>
            <person name="Bothe G."/>
            <person name="Rose M."/>
            <person name="Hauf J."/>
            <person name="Berneiser S."/>
            <person name="Hempel S."/>
            <person name="Feldpausch M."/>
            <person name="Lamberth S."/>
            <person name="Villarroel R."/>
            <person name="Gielen J."/>
            <person name="Ardiles W."/>
            <person name="Bents O."/>
            <person name="Lemcke K."/>
            <person name="Kolesov G."/>
            <person name="Mayer K.F.X."/>
            <person name="Rudd S."/>
            <person name="Schoof H."/>
            <person name="Schueller C."/>
            <person name="Zaccaria P."/>
            <person name="Mewes H.-W."/>
            <person name="Bevan M."/>
            <person name="Fransz P.F."/>
        </authorList>
    </citation>
    <scope>NUCLEOTIDE SEQUENCE [LARGE SCALE GENOMIC DNA]</scope>
    <source>
        <strain>cv. Columbia</strain>
    </source>
</reference>
<reference key="3">
    <citation type="journal article" date="1998" name="DNA Res.">
        <title>Structural analysis of Arabidopsis thaliana chromosome 5. VIII. Sequence features of the regions of 1,081,958 bp covered by seventeen physically assigned P1 and TAC clones.</title>
        <authorList>
            <person name="Asamizu E."/>
            <person name="Sato S."/>
            <person name="Kaneko T."/>
            <person name="Nakamura Y."/>
            <person name="Kotani H."/>
            <person name="Miyajima N."/>
            <person name="Tabata S."/>
        </authorList>
    </citation>
    <scope>NUCLEOTIDE SEQUENCE [LARGE SCALE GENOMIC DNA]</scope>
    <source>
        <strain>cv. Columbia</strain>
    </source>
</reference>
<reference key="4">
    <citation type="journal article" date="2017" name="Plant J.">
        <title>Araport11: a complete reannotation of the Arabidopsis thaliana reference genome.</title>
        <authorList>
            <person name="Cheng C.Y."/>
            <person name="Krishnakumar V."/>
            <person name="Chan A.P."/>
            <person name="Thibaud-Nissen F."/>
            <person name="Schobel S."/>
            <person name="Town C.D."/>
        </authorList>
    </citation>
    <scope>GENOME REANNOTATION</scope>
    <source>
        <strain>cv. Columbia</strain>
    </source>
</reference>
<reference key="5">
    <citation type="journal article" date="2008" name="Plant Cell">
        <title>The EPIP peptide of INFLORESCENCE DEFICIENT IN ABSCISSION is sufficient to induce abscission in arabidopsis through the receptor-like kinases HAESA and HAESA-LIKE2.</title>
        <authorList>
            <person name="Stenvik G.-E."/>
            <person name="Tandstad N.M."/>
            <person name="Guo Y."/>
            <person name="Shi C.-L."/>
            <person name="Kristiansen W."/>
            <person name="Holmgren A."/>
            <person name="Clark S.E."/>
            <person name="Aalen R.B."/>
            <person name="Butenko M.A."/>
        </authorList>
    </citation>
    <scope>FUNCTION</scope>
    <scope>TISSUE SPECIFICITY</scope>
</reference>
<protein>
    <recommendedName>
        <fullName>Protein IDA-LIKE 3</fullName>
    </recommendedName>
</protein>